<gene>
    <name evidence="1" type="primary">rplR</name>
    <name type="ordered locus">APJL_1811</name>
</gene>
<proteinExistence type="inferred from homology"/>
<organism>
    <name type="scientific">Actinobacillus pleuropneumoniae serotype 3 (strain JL03)</name>
    <dbReference type="NCBI Taxonomy" id="434271"/>
    <lineage>
        <taxon>Bacteria</taxon>
        <taxon>Pseudomonadati</taxon>
        <taxon>Pseudomonadota</taxon>
        <taxon>Gammaproteobacteria</taxon>
        <taxon>Pasteurellales</taxon>
        <taxon>Pasteurellaceae</taxon>
        <taxon>Actinobacillus</taxon>
    </lineage>
</organism>
<reference key="1">
    <citation type="journal article" date="2008" name="PLoS ONE">
        <title>Genome biology of Actinobacillus pleuropneumoniae JL03, an isolate of serotype 3 prevalent in China.</title>
        <authorList>
            <person name="Xu Z."/>
            <person name="Zhou Y."/>
            <person name="Li L."/>
            <person name="Zhou R."/>
            <person name="Xiao S."/>
            <person name="Wan Y."/>
            <person name="Zhang S."/>
            <person name="Wang K."/>
            <person name="Li W."/>
            <person name="Li L."/>
            <person name="Jin H."/>
            <person name="Kang M."/>
            <person name="Dalai B."/>
            <person name="Li T."/>
            <person name="Liu L."/>
            <person name="Cheng Y."/>
            <person name="Zhang L."/>
            <person name="Xu T."/>
            <person name="Zheng H."/>
            <person name="Pu S."/>
            <person name="Wang B."/>
            <person name="Gu W."/>
            <person name="Zhang X.L."/>
            <person name="Zhu G.-F."/>
            <person name="Wang S."/>
            <person name="Zhao G.-P."/>
            <person name="Chen H."/>
        </authorList>
    </citation>
    <scope>NUCLEOTIDE SEQUENCE [LARGE SCALE GENOMIC DNA]</scope>
    <source>
        <strain>JL03</strain>
    </source>
</reference>
<accession>B0BSU7</accession>
<name>RL18_ACTPJ</name>
<sequence>MDKKVARIRRATRARHLMREQGATRLVVHRTPRHIYAQVIAPNGSEVLAAASTVEKVIKEQVKYTGNKDAAAVVGKLVAERALAKGIQAVAFDRSGFKYHGRVQVLADAAREAGLQF</sequence>
<dbReference type="EMBL" id="CP000687">
    <property type="protein sequence ID" value="ABY70361.1"/>
    <property type="molecule type" value="Genomic_DNA"/>
</dbReference>
<dbReference type="RefSeq" id="WP_005599310.1">
    <property type="nucleotide sequence ID" value="NC_010278.1"/>
</dbReference>
<dbReference type="SMR" id="B0BSU7"/>
<dbReference type="GeneID" id="48600068"/>
<dbReference type="KEGG" id="apj:APJL_1811"/>
<dbReference type="HOGENOM" id="CLU_098841_0_1_6"/>
<dbReference type="Proteomes" id="UP000008547">
    <property type="component" value="Chromosome"/>
</dbReference>
<dbReference type="GO" id="GO:0022625">
    <property type="term" value="C:cytosolic large ribosomal subunit"/>
    <property type="evidence" value="ECO:0007669"/>
    <property type="project" value="TreeGrafter"/>
</dbReference>
<dbReference type="GO" id="GO:0008097">
    <property type="term" value="F:5S rRNA binding"/>
    <property type="evidence" value="ECO:0007669"/>
    <property type="project" value="TreeGrafter"/>
</dbReference>
<dbReference type="GO" id="GO:0003735">
    <property type="term" value="F:structural constituent of ribosome"/>
    <property type="evidence" value="ECO:0007669"/>
    <property type="project" value="InterPro"/>
</dbReference>
<dbReference type="GO" id="GO:0006412">
    <property type="term" value="P:translation"/>
    <property type="evidence" value="ECO:0007669"/>
    <property type="project" value="UniProtKB-UniRule"/>
</dbReference>
<dbReference type="CDD" id="cd00432">
    <property type="entry name" value="Ribosomal_L18_L5e"/>
    <property type="match status" value="1"/>
</dbReference>
<dbReference type="FunFam" id="3.30.420.100:FF:000001">
    <property type="entry name" value="50S ribosomal protein L18"/>
    <property type="match status" value="1"/>
</dbReference>
<dbReference type="Gene3D" id="3.30.420.100">
    <property type="match status" value="1"/>
</dbReference>
<dbReference type="HAMAP" id="MF_01337_B">
    <property type="entry name" value="Ribosomal_uL18_B"/>
    <property type="match status" value="1"/>
</dbReference>
<dbReference type="InterPro" id="IPR004389">
    <property type="entry name" value="Ribosomal_uL18_bac-type"/>
</dbReference>
<dbReference type="InterPro" id="IPR005484">
    <property type="entry name" value="Ribosomal_uL18_bac/euk"/>
</dbReference>
<dbReference type="NCBIfam" id="TIGR00060">
    <property type="entry name" value="L18_bact"/>
    <property type="match status" value="1"/>
</dbReference>
<dbReference type="PANTHER" id="PTHR12899">
    <property type="entry name" value="39S RIBOSOMAL PROTEIN L18, MITOCHONDRIAL"/>
    <property type="match status" value="1"/>
</dbReference>
<dbReference type="PANTHER" id="PTHR12899:SF3">
    <property type="entry name" value="LARGE RIBOSOMAL SUBUNIT PROTEIN UL18M"/>
    <property type="match status" value="1"/>
</dbReference>
<dbReference type="Pfam" id="PF00861">
    <property type="entry name" value="Ribosomal_L18p"/>
    <property type="match status" value="1"/>
</dbReference>
<dbReference type="SUPFAM" id="SSF53137">
    <property type="entry name" value="Translational machinery components"/>
    <property type="match status" value="1"/>
</dbReference>
<protein>
    <recommendedName>
        <fullName evidence="1">Large ribosomal subunit protein uL18</fullName>
    </recommendedName>
    <alternativeName>
        <fullName evidence="2">50S ribosomal protein L18</fullName>
    </alternativeName>
</protein>
<comment type="function">
    <text evidence="1">This is one of the proteins that bind and probably mediate the attachment of the 5S RNA into the large ribosomal subunit, where it forms part of the central protuberance.</text>
</comment>
<comment type="subunit">
    <text evidence="1">Part of the 50S ribosomal subunit; part of the 5S rRNA/L5/L18/L25 subcomplex. Contacts the 5S and 23S rRNAs.</text>
</comment>
<comment type="similarity">
    <text evidence="1">Belongs to the universal ribosomal protein uL18 family.</text>
</comment>
<keyword id="KW-0687">Ribonucleoprotein</keyword>
<keyword id="KW-0689">Ribosomal protein</keyword>
<keyword id="KW-0694">RNA-binding</keyword>
<keyword id="KW-0699">rRNA-binding</keyword>
<evidence type="ECO:0000255" key="1">
    <source>
        <dbReference type="HAMAP-Rule" id="MF_01337"/>
    </source>
</evidence>
<evidence type="ECO:0000305" key="2"/>
<feature type="chain" id="PRO_1000142612" description="Large ribosomal subunit protein uL18">
    <location>
        <begin position="1"/>
        <end position="117"/>
    </location>
</feature>